<organism>
    <name type="scientific">Wolbachia sp. subsp. Brugia malayi (strain TRS)</name>
    <dbReference type="NCBI Taxonomy" id="292805"/>
    <lineage>
        <taxon>Bacteria</taxon>
        <taxon>Pseudomonadati</taxon>
        <taxon>Pseudomonadota</taxon>
        <taxon>Alphaproteobacteria</taxon>
        <taxon>Rickettsiales</taxon>
        <taxon>Anaplasmataceae</taxon>
        <taxon>Wolbachieae</taxon>
        <taxon>Wolbachia</taxon>
    </lineage>
</organism>
<feature type="chain" id="PRO_0000341196" description="D-alanine--D-alanine ligase">
    <location>
        <begin position="1"/>
        <end position="339"/>
    </location>
</feature>
<feature type="domain" description="ATP-grasp" evidence="2">
    <location>
        <begin position="115"/>
        <end position="327"/>
    </location>
</feature>
<feature type="binding site" evidence="2">
    <location>
        <begin position="142"/>
        <end position="211"/>
    </location>
    <ligand>
        <name>ATP</name>
        <dbReference type="ChEBI" id="CHEBI:30616"/>
    </ligand>
</feature>
<feature type="binding site" evidence="2">
    <location>
        <position position="279"/>
    </location>
    <ligand>
        <name>Mg(2+)</name>
        <dbReference type="ChEBI" id="CHEBI:18420"/>
        <label>1</label>
    </ligand>
</feature>
<feature type="binding site" evidence="2">
    <location>
        <position position="293"/>
    </location>
    <ligand>
        <name>Mg(2+)</name>
        <dbReference type="ChEBI" id="CHEBI:18420"/>
        <label>1</label>
    </ligand>
</feature>
<feature type="binding site" evidence="2">
    <location>
        <position position="293"/>
    </location>
    <ligand>
        <name>Mg(2+)</name>
        <dbReference type="ChEBI" id="CHEBI:18420"/>
        <label>2</label>
    </ligand>
</feature>
<feature type="binding site" evidence="2">
    <location>
        <position position="295"/>
    </location>
    <ligand>
        <name>Mg(2+)</name>
        <dbReference type="ChEBI" id="CHEBI:18420"/>
        <label>2</label>
    </ligand>
</feature>
<reference key="1">
    <citation type="journal article" date="2005" name="PLoS Biol.">
        <title>The Wolbachia genome of Brugia malayi: endosymbiont evolution within a human pathogenic nematode.</title>
        <authorList>
            <person name="Foster J."/>
            <person name="Ganatra M."/>
            <person name="Kamal I."/>
            <person name="Ware J."/>
            <person name="Makarova K."/>
            <person name="Ivanova N."/>
            <person name="Bhattacharyya A."/>
            <person name="Kapatral V."/>
            <person name="Kumar S."/>
            <person name="Posfai J."/>
            <person name="Vincze T."/>
            <person name="Ingram J."/>
            <person name="Moran L."/>
            <person name="Lapidus A."/>
            <person name="Omelchenko M."/>
            <person name="Kyrpides N."/>
            <person name="Ghedin E."/>
            <person name="Wang S."/>
            <person name="Goltsman E."/>
            <person name="Joukov V."/>
            <person name="Ostrovskaya O."/>
            <person name="Tsukerman K."/>
            <person name="Mazur M."/>
            <person name="Comb D."/>
            <person name="Koonin E."/>
            <person name="Slatko B."/>
        </authorList>
    </citation>
    <scope>NUCLEOTIDE SEQUENCE [LARGE SCALE GENOMIC DNA]</scope>
    <source>
        <strain>TRS</strain>
    </source>
</reference>
<keyword id="KW-0067">ATP-binding</keyword>
<keyword id="KW-0133">Cell shape</keyword>
<keyword id="KW-0961">Cell wall biogenesis/degradation</keyword>
<keyword id="KW-0963">Cytoplasm</keyword>
<keyword id="KW-0436">Ligase</keyword>
<keyword id="KW-0460">Magnesium</keyword>
<keyword id="KW-0464">Manganese</keyword>
<keyword id="KW-0479">Metal-binding</keyword>
<keyword id="KW-0547">Nucleotide-binding</keyword>
<keyword id="KW-0573">Peptidoglycan synthesis</keyword>
<keyword id="KW-1185">Reference proteome</keyword>
<name>DDL_WOLTR</name>
<comment type="function">
    <text evidence="2">Cell wall formation.</text>
</comment>
<comment type="catalytic activity">
    <reaction evidence="2">
        <text>2 D-alanine + ATP = D-alanyl-D-alanine + ADP + phosphate + H(+)</text>
        <dbReference type="Rhea" id="RHEA:11224"/>
        <dbReference type="ChEBI" id="CHEBI:15378"/>
        <dbReference type="ChEBI" id="CHEBI:30616"/>
        <dbReference type="ChEBI" id="CHEBI:43474"/>
        <dbReference type="ChEBI" id="CHEBI:57416"/>
        <dbReference type="ChEBI" id="CHEBI:57822"/>
        <dbReference type="ChEBI" id="CHEBI:456216"/>
        <dbReference type="EC" id="6.3.2.4"/>
    </reaction>
</comment>
<comment type="cofactor">
    <cofactor evidence="1">
        <name>Mg(2+)</name>
        <dbReference type="ChEBI" id="CHEBI:18420"/>
    </cofactor>
    <cofactor evidence="1">
        <name>Mn(2+)</name>
        <dbReference type="ChEBI" id="CHEBI:29035"/>
    </cofactor>
    <text evidence="1">Binds 2 magnesium or manganese ions per subunit.</text>
</comment>
<comment type="pathway">
    <text evidence="2">Cell wall biogenesis; peptidoglycan biosynthesis.</text>
</comment>
<comment type="subcellular location">
    <subcellularLocation>
        <location evidence="2">Cytoplasm</location>
    </subcellularLocation>
</comment>
<comment type="similarity">
    <text evidence="2">Belongs to the D-alanine--D-alanine ligase family.</text>
</comment>
<sequence length="339" mass="38218">MYVVIINIVLLKVLMVLTITILSGGFSRERKISLMSGKAVKKALDSLSYNAIEIDVNSNTAEKLKKINPDLAFIALHGPYGEDGCIQGLLEILGIKYTHSGVMASAIAMNKAMSKHIFRSLGIDTPKGYIISRGDILKNNIKIDYPYVLKPINEGSSIGVHITFSHEDYLKLKNMFSVIPVHDAGIEEEEPVWITRDLMIIEEYIPGIELHTAVLLDEAAGTMEIRPKNKFYDYKAKYTNGFAEHIFPAEIPDNIYEMTLEHALKVHRFLGCKTISRSDFRYNPKDNTLKMLEINTHPGFTELSLVPEIAKLTKGIDFNELVKIIIEDSLQHKKILEIK</sequence>
<evidence type="ECO:0000250" key="1"/>
<evidence type="ECO:0000255" key="2">
    <source>
        <dbReference type="HAMAP-Rule" id="MF_00047"/>
    </source>
</evidence>
<gene>
    <name evidence="2" type="primary">ddl</name>
    <name type="ordered locus">Wbm0570</name>
</gene>
<dbReference type="EC" id="6.3.2.4" evidence="2"/>
<dbReference type="EMBL" id="AE017321">
    <property type="protein sequence ID" value="AAW71158.1"/>
    <property type="molecule type" value="Genomic_DNA"/>
</dbReference>
<dbReference type="SMR" id="Q5GS66"/>
<dbReference type="STRING" id="292805.Wbm0570"/>
<dbReference type="KEGG" id="wbm:Wbm0570"/>
<dbReference type="eggNOG" id="COG1181">
    <property type="taxonomic scope" value="Bacteria"/>
</dbReference>
<dbReference type="HOGENOM" id="CLU_039268_1_1_5"/>
<dbReference type="UniPathway" id="UPA00219"/>
<dbReference type="Proteomes" id="UP000000534">
    <property type="component" value="Chromosome"/>
</dbReference>
<dbReference type="GO" id="GO:0005737">
    <property type="term" value="C:cytoplasm"/>
    <property type="evidence" value="ECO:0007669"/>
    <property type="project" value="UniProtKB-SubCell"/>
</dbReference>
<dbReference type="GO" id="GO:0005524">
    <property type="term" value="F:ATP binding"/>
    <property type="evidence" value="ECO:0007669"/>
    <property type="project" value="UniProtKB-KW"/>
</dbReference>
<dbReference type="GO" id="GO:0008716">
    <property type="term" value="F:D-alanine-D-alanine ligase activity"/>
    <property type="evidence" value="ECO:0007669"/>
    <property type="project" value="UniProtKB-UniRule"/>
</dbReference>
<dbReference type="GO" id="GO:0046872">
    <property type="term" value="F:metal ion binding"/>
    <property type="evidence" value="ECO:0007669"/>
    <property type="project" value="UniProtKB-KW"/>
</dbReference>
<dbReference type="GO" id="GO:0071555">
    <property type="term" value="P:cell wall organization"/>
    <property type="evidence" value="ECO:0007669"/>
    <property type="project" value="UniProtKB-KW"/>
</dbReference>
<dbReference type="GO" id="GO:0009252">
    <property type="term" value="P:peptidoglycan biosynthetic process"/>
    <property type="evidence" value="ECO:0007669"/>
    <property type="project" value="UniProtKB-UniRule"/>
</dbReference>
<dbReference type="GO" id="GO:0008360">
    <property type="term" value="P:regulation of cell shape"/>
    <property type="evidence" value="ECO:0007669"/>
    <property type="project" value="UniProtKB-KW"/>
</dbReference>
<dbReference type="Gene3D" id="3.40.50.20">
    <property type="match status" value="1"/>
</dbReference>
<dbReference type="Gene3D" id="3.30.1490.20">
    <property type="entry name" value="ATP-grasp fold, A domain"/>
    <property type="match status" value="1"/>
</dbReference>
<dbReference type="Gene3D" id="3.30.470.20">
    <property type="entry name" value="ATP-grasp fold, B domain"/>
    <property type="match status" value="1"/>
</dbReference>
<dbReference type="HAMAP" id="MF_00047">
    <property type="entry name" value="Dala_Dala_lig"/>
    <property type="match status" value="1"/>
</dbReference>
<dbReference type="InterPro" id="IPR011761">
    <property type="entry name" value="ATP-grasp"/>
</dbReference>
<dbReference type="InterPro" id="IPR013815">
    <property type="entry name" value="ATP_grasp_subdomain_1"/>
</dbReference>
<dbReference type="InterPro" id="IPR000291">
    <property type="entry name" value="D-Ala_lig_Van_CS"/>
</dbReference>
<dbReference type="InterPro" id="IPR005905">
    <property type="entry name" value="D_ala_D_ala"/>
</dbReference>
<dbReference type="InterPro" id="IPR011095">
    <property type="entry name" value="Dala_Dala_lig_C"/>
</dbReference>
<dbReference type="InterPro" id="IPR011127">
    <property type="entry name" value="Dala_Dala_lig_N"/>
</dbReference>
<dbReference type="InterPro" id="IPR016185">
    <property type="entry name" value="PreATP-grasp_dom_sf"/>
</dbReference>
<dbReference type="NCBIfam" id="TIGR01205">
    <property type="entry name" value="D_ala_D_alaTIGR"/>
    <property type="match status" value="1"/>
</dbReference>
<dbReference type="NCBIfam" id="NF002378">
    <property type="entry name" value="PRK01372.1"/>
    <property type="match status" value="1"/>
</dbReference>
<dbReference type="PANTHER" id="PTHR23132">
    <property type="entry name" value="D-ALANINE--D-ALANINE LIGASE"/>
    <property type="match status" value="1"/>
</dbReference>
<dbReference type="PANTHER" id="PTHR23132:SF23">
    <property type="entry name" value="D-ALANINE--D-ALANINE LIGASE B"/>
    <property type="match status" value="1"/>
</dbReference>
<dbReference type="Pfam" id="PF07478">
    <property type="entry name" value="Dala_Dala_lig_C"/>
    <property type="match status" value="1"/>
</dbReference>
<dbReference type="Pfam" id="PF01820">
    <property type="entry name" value="Dala_Dala_lig_N"/>
    <property type="match status" value="1"/>
</dbReference>
<dbReference type="PIRSF" id="PIRSF039102">
    <property type="entry name" value="Ddl/VanB"/>
    <property type="match status" value="1"/>
</dbReference>
<dbReference type="SUPFAM" id="SSF56059">
    <property type="entry name" value="Glutathione synthetase ATP-binding domain-like"/>
    <property type="match status" value="1"/>
</dbReference>
<dbReference type="SUPFAM" id="SSF52440">
    <property type="entry name" value="PreATP-grasp domain"/>
    <property type="match status" value="1"/>
</dbReference>
<dbReference type="PROSITE" id="PS50975">
    <property type="entry name" value="ATP_GRASP"/>
    <property type="match status" value="1"/>
</dbReference>
<dbReference type="PROSITE" id="PS00843">
    <property type="entry name" value="DALA_DALA_LIGASE_1"/>
    <property type="match status" value="1"/>
</dbReference>
<proteinExistence type="inferred from homology"/>
<protein>
    <recommendedName>
        <fullName evidence="2">D-alanine--D-alanine ligase</fullName>
        <ecNumber evidence="2">6.3.2.4</ecNumber>
    </recommendedName>
    <alternativeName>
        <fullName evidence="2">D-Ala-D-Ala ligase</fullName>
    </alternativeName>
    <alternativeName>
        <fullName evidence="2">D-alanylalanine synthetase</fullName>
    </alternativeName>
</protein>
<accession>Q5GS66</accession>